<reference key="1">
    <citation type="journal article" date="2011" name="J. Bacteriol.">
        <title>Complete genome sequence of Haloarcula hispanica, a model haloarchaeon for studying genetics, metabolism, and virus-host interaction.</title>
        <authorList>
            <person name="Liu H."/>
            <person name="Wu Z."/>
            <person name="Li M."/>
            <person name="Zhang F."/>
            <person name="Zheng H."/>
            <person name="Han J."/>
            <person name="Liu J."/>
            <person name="Zhou J."/>
            <person name="Wang S."/>
            <person name="Xiang H."/>
        </authorList>
    </citation>
    <scope>NUCLEOTIDE SEQUENCE [LARGE SCALE GENOMIC DNA]</scope>
    <source>
        <strain>ATCC 33960 / DSM 4426 / JCM 8911 / NBRC 102182 / NCIMB 2187 / VKM B-1755</strain>
    </source>
</reference>
<reference key="2">
    <citation type="journal article" date="2017" name="Front. Microbiol.">
        <title>Succinyl-CoA:mesaconate CoA-transferase and mesaconyl-CoA hydratase, enzymes of the methylaspartate cycle in Haloarcula hispanica.</title>
        <authorList>
            <person name="Borjian F."/>
            <person name="Johnsen U."/>
            <person name="Schoenheit P."/>
            <person name="Berg I.A."/>
        </authorList>
    </citation>
    <scope>FUNCTION</scope>
    <scope>CATALYTIC ACTIVITY</scope>
    <scope>ACTIVITY REGULATION</scope>
    <scope>BIOPHYSICOCHEMICAL PROPERTIES</scope>
    <scope>SUBUNIT</scope>
</reference>
<feature type="chain" id="PRO_0000451974" description="Succinyl-CoA:mesaconate CoA-transferase">
    <location>
        <begin position="1"/>
        <end position="396"/>
    </location>
</feature>
<feature type="active site" description="Nucleophile" evidence="1">
    <location>
        <position position="175"/>
    </location>
</feature>
<proteinExistence type="evidence at protein level"/>
<sequence length="396" mass="42996">MGALDDLRVLDLTQVLAGPYCTMLLADMGADVVKVERPGGDLIRSNPPFVSDGDEEAYGGYFQSVNRGKRSLELDLGTDEDREAFLSLVERADVVVENFKAGTMEKFDCGYETLREHNPDLIYSSIRGFGDPRTGETHRQGQPSFDLIAQALGGVMEITGQSDGPPTKVGPGVGDLFTAVLNAVGILAAVHHRERTGEGQYVDTAMYDSMVSLCERTVYQYSCDGESPTRQGNSHPTLFPYDSFEAADGHVVIAAFADGHWETLCEAMERPDLAADYPDAGSRIANRESLRREIADWTATIDSETLLDLLEGRVPAAPVQNTADIFDDPHIHDREMLTDVDQPGADEQITIAGSPIKMTETMPSPGGRAPLLDEHRAELLDEAGVGTGTNRVESDD</sequence>
<protein>
    <recommendedName>
        <fullName evidence="3">Succinyl-CoA:mesaconate CoA-transferase</fullName>
        <ecNumber evidence="2">2.8.3.26</ecNumber>
    </recommendedName>
    <alternativeName>
        <fullName evidence="3">Mesaconate CoA-transferase</fullName>
    </alternativeName>
</protein>
<gene>
    <name evidence="3" type="primary">mct</name>
    <name evidence="5" type="ordered locus">HAH_1336</name>
</gene>
<keyword id="KW-0808">Transferase</keyword>
<dbReference type="EC" id="2.8.3.26" evidence="2"/>
<dbReference type="EMBL" id="CP002921">
    <property type="protein sequence ID" value="AEM56950.1"/>
    <property type="molecule type" value="Genomic_DNA"/>
</dbReference>
<dbReference type="RefSeq" id="WP_014040202.1">
    <property type="nucleotide sequence ID" value="NC_015948.1"/>
</dbReference>
<dbReference type="SMR" id="G0HQ31"/>
<dbReference type="STRING" id="634497.HAH_1336"/>
<dbReference type="GeneID" id="23803956"/>
<dbReference type="KEGG" id="hhi:HAH_1336"/>
<dbReference type="eggNOG" id="arCOG02304">
    <property type="taxonomic scope" value="Archaea"/>
</dbReference>
<dbReference type="HOGENOM" id="CLU_033975_0_0_2"/>
<dbReference type="OrthoDB" id="28444at2157"/>
<dbReference type="BRENDA" id="2.8.3.26">
    <property type="organism ID" value="8340"/>
</dbReference>
<dbReference type="Proteomes" id="UP000005629">
    <property type="component" value="Chromosome I"/>
</dbReference>
<dbReference type="GO" id="GO:0008410">
    <property type="term" value="F:CoA-transferase activity"/>
    <property type="evidence" value="ECO:0007669"/>
    <property type="project" value="TreeGrafter"/>
</dbReference>
<dbReference type="Gene3D" id="3.40.50.10540">
    <property type="entry name" value="Crotonobetainyl-coa:carnitine coa-transferase, domain 1"/>
    <property type="match status" value="1"/>
</dbReference>
<dbReference type="Gene3D" id="3.30.1540.10">
    <property type="entry name" value="formyl-coa transferase, domain 3"/>
    <property type="match status" value="1"/>
</dbReference>
<dbReference type="InterPro" id="IPR050483">
    <property type="entry name" value="CoA-transferase_III_domain"/>
</dbReference>
<dbReference type="InterPro" id="IPR003673">
    <property type="entry name" value="CoA-Trfase_fam_III"/>
</dbReference>
<dbReference type="InterPro" id="IPR044855">
    <property type="entry name" value="CoA-Trfase_III_dom3_sf"/>
</dbReference>
<dbReference type="InterPro" id="IPR023606">
    <property type="entry name" value="CoA-Trfase_III_dom_1_sf"/>
</dbReference>
<dbReference type="InterPro" id="IPR054905">
    <property type="entry name" value="Scnl_mescCoAtase"/>
</dbReference>
<dbReference type="NCBIfam" id="NF041294">
    <property type="entry name" value="Scnl_mescCoAtase"/>
    <property type="match status" value="1"/>
</dbReference>
<dbReference type="PANTHER" id="PTHR48207">
    <property type="entry name" value="SUCCINATE--HYDROXYMETHYLGLUTARATE COA-TRANSFERASE"/>
    <property type="match status" value="1"/>
</dbReference>
<dbReference type="PANTHER" id="PTHR48207:SF3">
    <property type="entry name" value="SUCCINATE--HYDROXYMETHYLGLUTARATE COA-TRANSFERASE"/>
    <property type="match status" value="1"/>
</dbReference>
<dbReference type="Pfam" id="PF02515">
    <property type="entry name" value="CoA_transf_3"/>
    <property type="match status" value="1"/>
</dbReference>
<dbReference type="SUPFAM" id="SSF89796">
    <property type="entry name" value="CoA-transferase family III (CaiB/BaiF)"/>
    <property type="match status" value="1"/>
</dbReference>
<organism>
    <name type="scientific">Haloarcula hispanica (strain ATCC 33960 / DSM 4426 / JCM 8911 / NBRC 102182 / NCIMB 2187 / VKM B-1755)</name>
    <dbReference type="NCBI Taxonomy" id="634497"/>
    <lineage>
        <taxon>Archaea</taxon>
        <taxon>Methanobacteriati</taxon>
        <taxon>Methanobacteriota</taxon>
        <taxon>Stenosarchaea group</taxon>
        <taxon>Halobacteria</taxon>
        <taxon>Halobacteriales</taxon>
        <taxon>Haloarculaceae</taxon>
        <taxon>Haloarcula</taxon>
    </lineage>
</organism>
<comment type="function">
    <text evidence="2">Involved in the methylaspartate cycle. Catalyzes the transfer of the CoA moiety from succinyl-CoA to mesaconate to generate mesaconyl-CoA (2-methylfumaryl-CoA) and succinate (PubMed:28932214). Also shows high activity with methylsuccinate as CoA-acceptor, and only low activity with glutarate, acrylate and itaconate (PubMed:28932214). Cannot use other CoA donors like acetyl-CoA, propionyl-CoA, butyryl-CoA or acetoacetyl-CoA (PubMed:28932214).</text>
</comment>
<comment type="catalytic activity">
    <reaction evidence="2">
        <text>mesaconate + succinyl-CoA = 2-methylfumaryl-CoA + succinate</text>
        <dbReference type="Rhea" id="RHEA:45820"/>
        <dbReference type="ChEBI" id="CHEBI:30031"/>
        <dbReference type="ChEBI" id="CHEBI:36986"/>
        <dbReference type="ChEBI" id="CHEBI:57292"/>
        <dbReference type="ChEBI" id="CHEBI:75635"/>
        <dbReference type="EC" id="2.8.3.26"/>
    </reaction>
    <physiologicalReaction direction="left-to-right" evidence="2">
        <dbReference type="Rhea" id="RHEA:45821"/>
    </physiologicalReaction>
</comment>
<comment type="activity regulation">
    <text evidence="2">Shows highest activity at 4 M KCl. Does not require divalent ions for activity.</text>
</comment>
<comment type="biophysicochemical properties">
    <kinetics>
        <KM evidence="2">2.8 mM for succinyl-CoA (in the presence of 10 mM mesaconate)</KM>
        <KM evidence="2">1.3 mM for mesaconate (in the presence of 1 mM succinyl-CoA)</KM>
        <KM evidence="2">7.1 mM for mesaconate (in the presence of 5 mM succinyl-CoA)</KM>
        <KM evidence="2">0.6 mM for methylsuccinate (in the presence of 1 mM succinyl-CoA)</KM>
        <KM evidence="2">2.9 mM for methylsuccinate (in the presence of 5 mM succinyl-CoA)</KM>
        <KM evidence="2">40.9 mM for glutarate (in the presence of 1 mM succinyl-CoA)</KM>
        <KM evidence="2">39.3 mM for acrylate (in the presence of 1 mM succinyl-CoA)</KM>
        <Vmax evidence="2">69.2 umol/min/mg enzyme with succinyl-CoA as substrate (in the presence of 10 mM mesaconate)</Vmax>
        <Vmax evidence="2">17.0 umol/min/mg enzyme with mesaconate as substrate (in the presence of 1 mM succinyl-CoA)</Vmax>
        <Vmax evidence="2">45.0 umol/min/mg enzyme with mesaconate as substrate (in the presence of 5 mM succinyl-CoA)</Vmax>
        <Vmax evidence="2">11.0 umol/min/mg enzyme with methylsuccinate as substrate (in the presence of 1 mM succinyl-CoA)</Vmax>
        <Vmax evidence="2">36.8 umol/min/mg enzyme with methylsuccinate as substrate (in the presence of 5 mM succinyl-CoA)</Vmax>
    </kinetics>
</comment>
<comment type="subunit">
    <text evidence="2">Homodimer.</text>
</comment>
<comment type="similarity">
    <text evidence="4">Belongs to the CoA-transferase III family.</text>
</comment>
<accession>G0HQ31</accession>
<name>MCT_HALHT</name>
<evidence type="ECO:0000250" key="1">
    <source>
        <dbReference type="UniProtKB" id="P69902"/>
    </source>
</evidence>
<evidence type="ECO:0000269" key="2">
    <source>
    </source>
</evidence>
<evidence type="ECO:0000303" key="3">
    <source>
    </source>
</evidence>
<evidence type="ECO:0000305" key="4"/>
<evidence type="ECO:0000312" key="5">
    <source>
        <dbReference type="EMBL" id="AEM56950.1"/>
    </source>
</evidence>